<sequence length="488" mass="53505">MDALKVQILPDNQSSPSSTHMLTKPKSKKATKSIAMLIVASLAITLGLLFVFSSNSVMFSASFLRRSSLHYSVIIDAGSSGTRIHVFGYWFESGKPVFDFGEEHYASLKLSPGLSSYADNPEGASVSVTKLVEFAKGRIPKGKLKKSDIRLMATAGMRLLDVPVQEQILDVTRRVLRSSGFKFQDEWATVISGTDEGIYAWVVANHALGSLGGDPLKTTGIVELGGASAQVTFVPSEHVPPEFSRTISYGNVSYTIYSHSFLDFGQDAAEDKLLESLQNSVAASTGDGIVEDPCTPKGYIYDTHSQKDSSGFLSEESKFKASLQVQAAGDFTKCRSATLAMLQEGKENCAYKHCSIGSTFTPNIQGSFLATENFFHTSKFFGLGEKEWLSEMILAGKRFCGEEWSKLKEKYPTTKDKYLHRYCFSSAYIISMLHDSLGVALDDERIKYASKAGKENIPLDWALGAFILNTDTPTSDYNGKSRKMIGFK</sequence>
<organism>
    <name type="scientific">Arabidopsis thaliana</name>
    <name type="common">Mouse-ear cress</name>
    <dbReference type="NCBI Taxonomy" id="3702"/>
    <lineage>
        <taxon>Eukaryota</taxon>
        <taxon>Viridiplantae</taxon>
        <taxon>Streptophyta</taxon>
        <taxon>Embryophyta</taxon>
        <taxon>Tracheophyta</taxon>
        <taxon>Spermatophyta</taxon>
        <taxon>Magnoliopsida</taxon>
        <taxon>eudicotyledons</taxon>
        <taxon>Gunneridae</taxon>
        <taxon>Pentapetalae</taxon>
        <taxon>rosids</taxon>
        <taxon>malvids</taxon>
        <taxon>Brassicales</taxon>
        <taxon>Brassicaceae</taxon>
        <taxon>Camelineae</taxon>
        <taxon>Arabidopsis</taxon>
    </lineage>
</organism>
<gene>
    <name type="primary">APY5</name>
    <name type="ordered locus">At1g14250</name>
    <name type="ORF">F14L17.1</name>
    <name type="ORF">F7A19</name>
</gene>
<proteinExistence type="evidence at transcript level"/>
<feature type="chain" id="PRO_0000420343" description="Probable apyrase 5">
    <location>
        <begin position="1"/>
        <end position="488"/>
    </location>
</feature>
<feature type="topological domain" description="Cytoplasmic" evidence="2">
    <location>
        <begin position="1"/>
        <end position="32"/>
    </location>
</feature>
<feature type="transmembrane region" description="Helical; Signal-anchor for type II membrane protein" evidence="2">
    <location>
        <begin position="33"/>
        <end position="53"/>
    </location>
</feature>
<feature type="topological domain" description="Extracellular" evidence="2">
    <location>
        <begin position="54"/>
        <end position="488"/>
    </location>
</feature>
<feature type="region of interest" description="Disordered" evidence="3">
    <location>
        <begin position="1"/>
        <end position="26"/>
    </location>
</feature>
<feature type="compositionally biased region" description="Polar residues" evidence="3">
    <location>
        <begin position="10"/>
        <end position="21"/>
    </location>
</feature>
<feature type="active site" description="Proton acceptor" evidence="1">
    <location>
        <position position="196"/>
    </location>
</feature>
<feature type="binding site" evidence="5">
    <location>
        <begin position="73"/>
        <end position="83"/>
    </location>
    <ligand>
        <name>ATP</name>
        <dbReference type="ChEBI" id="CHEBI:30616"/>
    </ligand>
</feature>
<feature type="binding site" evidence="5">
    <location>
        <begin position="220"/>
        <end position="230"/>
    </location>
    <ligand>
        <name>ATP</name>
        <dbReference type="ChEBI" id="CHEBI:30616"/>
    </ligand>
</feature>
<feature type="glycosylation site" description="N-linked (GlcNAc...) asparagine" evidence="2">
    <location>
        <position position="251"/>
    </location>
</feature>
<evidence type="ECO:0000250" key="1"/>
<evidence type="ECO:0000255" key="2"/>
<evidence type="ECO:0000256" key="3">
    <source>
        <dbReference type="SAM" id="MobiDB-lite"/>
    </source>
</evidence>
<evidence type="ECO:0000269" key="4">
    <source ref="1"/>
</evidence>
<evidence type="ECO:0000305" key="5"/>
<comment type="function">
    <text evidence="1">Catalyzes the hydrolysis of phosphoanhydride bonds of nucleoside tri- and di-phosphates.</text>
</comment>
<comment type="catalytic activity">
    <reaction>
        <text>a ribonucleoside 5'-triphosphate + 2 H2O = a ribonucleoside 5'-phosphate + 2 phosphate + 2 H(+)</text>
        <dbReference type="Rhea" id="RHEA:36795"/>
        <dbReference type="ChEBI" id="CHEBI:15377"/>
        <dbReference type="ChEBI" id="CHEBI:15378"/>
        <dbReference type="ChEBI" id="CHEBI:43474"/>
        <dbReference type="ChEBI" id="CHEBI:58043"/>
        <dbReference type="ChEBI" id="CHEBI:61557"/>
        <dbReference type="EC" id="3.6.1.5"/>
    </reaction>
</comment>
<comment type="cofactor">
    <cofactor evidence="1">
        <name>Ca(2+)</name>
        <dbReference type="ChEBI" id="CHEBI:29108"/>
    </cofactor>
</comment>
<comment type="subcellular location">
    <subcellularLocation>
        <location evidence="1">Membrane</location>
        <topology evidence="1">Single-pass type II membrane protein</topology>
    </subcellularLocation>
</comment>
<comment type="tissue specificity">
    <text evidence="4">Highly expressed in young rosette leaves but only weakly in roots.</text>
</comment>
<comment type="induction">
    <text evidence="4">By wounding and drought stress.</text>
</comment>
<comment type="disruption phenotype">
    <text evidence="4">No visible phenotype.</text>
</comment>
<comment type="similarity">
    <text evidence="5">Belongs to the GDA1/CD39 NTPase family.</text>
</comment>
<keyword id="KW-0067">ATP-binding</keyword>
<keyword id="KW-0106">Calcium</keyword>
<keyword id="KW-0325">Glycoprotein</keyword>
<keyword id="KW-0378">Hydrolase</keyword>
<keyword id="KW-0472">Membrane</keyword>
<keyword id="KW-0547">Nucleotide-binding</keyword>
<keyword id="KW-1185">Reference proteome</keyword>
<keyword id="KW-0735">Signal-anchor</keyword>
<keyword id="KW-0812">Transmembrane</keyword>
<keyword id="KW-1133">Transmembrane helix</keyword>
<reference key="1">
    <citation type="thesis" date="2011" institute="University of Texas" country="United States">
        <title>Functional analyses of Arabidopsis apyrases 3 through 7.</title>
        <authorList>
            <person name="Yang J."/>
        </authorList>
    </citation>
    <scope>NUCLEOTIDE SEQUENCE [MRNA]</scope>
    <scope>DISRUPTION PHENOTYPE</scope>
    <scope>TISSUE SPECIFICITY</scope>
    <scope>INDUCTION</scope>
    <source>
        <strain>cv. Columbia</strain>
    </source>
</reference>
<reference key="2">
    <citation type="journal article" date="2000" name="Nature">
        <title>Sequence and analysis of chromosome 1 of the plant Arabidopsis thaliana.</title>
        <authorList>
            <person name="Theologis A."/>
            <person name="Ecker J.R."/>
            <person name="Palm C.J."/>
            <person name="Federspiel N.A."/>
            <person name="Kaul S."/>
            <person name="White O."/>
            <person name="Alonso J."/>
            <person name="Altafi H."/>
            <person name="Araujo R."/>
            <person name="Bowman C.L."/>
            <person name="Brooks S.Y."/>
            <person name="Buehler E."/>
            <person name="Chan A."/>
            <person name="Chao Q."/>
            <person name="Chen H."/>
            <person name="Cheuk R.F."/>
            <person name="Chin C.W."/>
            <person name="Chung M.K."/>
            <person name="Conn L."/>
            <person name="Conway A.B."/>
            <person name="Conway A.R."/>
            <person name="Creasy T.H."/>
            <person name="Dewar K."/>
            <person name="Dunn P."/>
            <person name="Etgu P."/>
            <person name="Feldblyum T.V."/>
            <person name="Feng J.-D."/>
            <person name="Fong B."/>
            <person name="Fujii C.Y."/>
            <person name="Gill J.E."/>
            <person name="Goldsmith A.D."/>
            <person name="Haas B."/>
            <person name="Hansen N.F."/>
            <person name="Hughes B."/>
            <person name="Huizar L."/>
            <person name="Hunter J.L."/>
            <person name="Jenkins J."/>
            <person name="Johnson-Hopson C."/>
            <person name="Khan S."/>
            <person name="Khaykin E."/>
            <person name="Kim C.J."/>
            <person name="Koo H.L."/>
            <person name="Kremenetskaia I."/>
            <person name="Kurtz D.B."/>
            <person name="Kwan A."/>
            <person name="Lam B."/>
            <person name="Langin-Hooper S."/>
            <person name="Lee A."/>
            <person name="Lee J.M."/>
            <person name="Lenz C.A."/>
            <person name="Li J.H."/>
            <person name="Li Y.-P."/>
            <person name="Lin X."/>
            <person name="Liu S.X."/>
            <person name="Liu Z.A."/>
            <person name="Luros J.S."/>
            <person name="Maiti R."/>
            <person name="Marziali A."/>
            <person name="Militscher J."/>
            <person name="Miranda M."/>
            <person name="Nguyen M."/>
            <person name="Nierman W.C."/>
            <person name="Osborne B.I."/>
            <person name="Pai G."/>
            <person name="Peterson J."/>
            <person name="Pham P.K."/>
            <person name="Rizzo M."/>
            <person name="Rooney T."/>
            <person name="Rowley D."/>
            <person name="Sakano H."/>
            <person name="Salzberg S.L."/>
            <person name="Schwartz J.R."/>
            <person name="Shinn P."/>
            <person name="Southwick A.M."/>
            <person name="Sun H."/>
            <person name="Tallon L.J."/>
            <person name="Tambunga G."/>
            <person name="Toriumi M.J."/>
            <person name="Town C.D."/>
            <person name="Utterback T."/>
            <person name="Van Aken S."/>
            <person name="Vaysberg M."/>
            <person name="Vysotskaia V.S."/>
            <person name="Walker M."/>
            <person name="Wu D."/>
            <person name="Yu G."/>
            <person name="Fraser C.M."/>
            <person name="Venter J.C."/>
            <person name="Davis R.W."/>
        </authorList>
    </citation>
    <scope>NUCLEOTIDE SEQUENCE [LARGE SCALE GENOMIC DNA]</scope>
    <source>
        <strain>cv. Columbia</strain>
    </source>
</reference>
<reference key="3">
    <citation type="journal article" date="2017" name="Plant J.">
        <title>Araport11: a complete reannotation of the Arabidopsis thaliana reference genome.</title>
        <authorList>
            <person name="Cheng C.Y."/>
            <person name="Krishnakumar V."/>
            <person name="Chan A.P."/>
            <person name="Thibaud-Nissen F."/>
            <person name="Schobel S."/>
            <person name="Town C.D."/>
        </authorList>
    </citation>
    <scope>GENOME REANNOTATION</scope>
    <source>
        <strain>cv. Columbia</strain>
    </source>
</reference>
<reference key="4">
    <citation type="journal article" date="2003" name="Science">
        <title>Empirical analysis of transcriptional activity in the Arabidopsis genome.</title>
        <authorList>
            <person name="Yamada K."/>
            <person name="Lim J."/>
            <person name="Dale J.M."/>
            <person name="Chen H."/>
            <person name="Shinn P."/>
            <person name="Palm C.J."/>
            <person name="Southwick A.M."/>
            <person name="Wu H.C."/>
            <person name="Kim C.J."/>
            <person name="Nguyen M."/>
            <person name="Pham P.K."/>
            <person name="Cheuk R.F."/>
            <person name="Karlin-Newmann G."/>
            <person name="Liu S.X."/>
            <person name="Lam B."/>
            <person name="Sakano H."/>
            <person name="Wu T."/>
            <person name="Yu G."/>
            <person name="Miranda M."/>
            <person name="Quach H.L."/>
            <person name="Tripp M."/>
            <person name="Chang C.H."/>
            <person name="Lee J.M."/>
            <person name="Toriumi M.J."/>
            <person name="Chan M.M."/>
            <person name="Tang C.C."/>
            <person name="Onodera C.S."/>
            <person name="Deng J.M."/>
            <person name="Akiyama K."/>
            <person name="Ansari Y."/>
            <person name="Arakawa T."/>
            <person name="Banh J."/>
            <person name="Banno F."/>
            <person name="Bowser L."/>
            <person name="Brooks S.Y."/>
            <person name="Carninci P."/>
            <person name="Chao Q."/>
            <person name="Choy N."/>
            <person name="Enju A."/>
            <person name="Goldsmith A.D."/>
            <person name="Gurjal M."/>
            <person name="Hansen N.F."/>
            <person name="Hayashizaki Y."/>
            <person name="Johnson-Hopson C."/>
            <person name="Hsuan V.W."/>
            <person name="Iida K."/>
            <person name="Karnes M."/>
            <person name="Khan S."/>
            <person name="Koesema E."/>
            <person name="Ishida J."/>
            <person name="Jiang P.X."/>
            <person name="Jones T."/>
            <person name="Kawai J."/>
            <person name="Kamiya A."/>
            <person name="Meyers C."/>
            <person name="Nakajima M."/>
            <person name="Narusaka M."/>
            <person name="Seki M."/>
            <person name="Sakurai T."/>
            <person name="Satou M."/>
            <person name="Tamse R."/>
            <person name="Vaysberg M."/>
            <person name="Wallender E.K."/>
            <person name="Wong C."/>
            <person name="Yamamura Y."/>
            <person name="Yuan S."/>
            <person name="Shinozaki K."/>
            <person name="Davis R.W."/>
            <person name="Theologis A."/>
            <person name="Ecker J.R."/>
        </authorList>
    </citation>
    <scope>NUCLEOTIDE SEQUENCE [LARGE SCALE MRNA]</scope>
    <source>
        <strain>cv. Columbia</strain>
    </source>
</reference>
<reference key="5">
    <citation type="submission" date="2004-09" db="EMBL/GenBank/DDBJ databases">
        <title>Large-scale analysis of RIKEN Arabidopsis full-length (RAFL) cDNAs.</title>
        <authorList>
            <person name="Totoki Y."/>
            <person name="Seki M."/>
            <person name="Ishida J."/>
            <person name="Nakajima M."/>
            <person name="Enju A."/>
            <person name="Kamiya A."/>
            <person name="Narusaka M."/>
            <person name="Shin-i T."/>
            <person name="Nakagawa M."/>
            <person name="Sakamoto N."/>
            <person name="Oishi K."/>
            <person name="Kohara Y."/>
            <person name="Kobayashi M."/>
            <person name="Toyoda A."/>
            <person name="Sakaki Y."/>
            <person name="Sakurai T."/>
            <person name="Iida K."/>
            <person name="Akiyama K."/>
            <person name="Satou M."/>
            <person name="Toyoda T."/>
            <person name="Konagaya A."/>
            <person name="Carninci P."/>
            <person name="Kawai J."/>
            <person name="Hayashizaki Y."/>
            <person name="Shinozaki K."/>
        </authorList>
    </citation>
    <scope>NUCLEOTIDE SEQUENCE [LARGE SCALE MRNA]</scope>
    <source>
        <strain>cv. Columbia</strain>
    </source>
</reference>
<protein>
    <recommendedName>
        <fullName>Probable apyrase 5</fullName>
        <shortName>AtAPY5</shortName>
        <ecNumber>3.6.1.5</ecNumber>
    </recommendedName>
    <alternativeName>
        <fullName>ATP-diphosphatase</fullName>
    </alternativeName>
    <alternativeName>
        <fullName>ATP-diphosphohydrolase</fullName>
    </alternativeName>
    <alternativeName>
        <fullName>Adenosine diphosphatase</fullName>
        <shortName>ADPase</shortName>
    </alternativeName>
    <alternativeName>
        <fullName>NTPDase</fullName>
    </alternativeName>
    <alternativeName>
        <fullName>Nucleoside triphosphate diphosphohydrolase 5</fullName>
    </alternativeName>
</protein>
<name>APY5_ARATH</name>
<accession>Q6NQA8</accession>
<accession>Q9M9T7</accession>
<dbReference type="EC" id="3.6.1.5"/>
<dbReference type="EMBL" id="JF830010">
    <property type="protein sequence ID" value="AEJ38086.1"/>
    <property type="molecule type" value="mRNA"/>
</dbReference>
<dbReference type="EMBL" id="AC007576">
    <property type="status" value="NOT_ANNOTATED_CDS"/>
    <property type="molecule type" value="Genomic_DNA"/>
</dbReference>
<dbReference type="EMBL" id="AC012188">
    <property type="protein sequence ID" value="AAF43924.1"/>
    <property type="molecule type" value="Genomic_DNA"/>
</dbReference>
<dbReference type="EMBL" id="CP002684">
    <property type="protein sequence ID" value="AEE29131.1"/>
    <property type="molecule type" value="Genomic_DNA"/>
</dbReference>
<dbReference type="EMBL" id="BT010550">
    <property type="protein sequence ID" value="AAQ65173.1"/>
    <property type="molecule type" value="mRNA"/>
</dbReference>
<dbReference type="EMBL" id="AK175135">
    <property type="protein sequence ID" value="BAD42898.1"/>
    <property type="molecule type" value="mRNA"/>
</dbReference>
<dbReference type="EMBL" id="AK175519">
    <property type="protein sequence ID" value="BAD43282.1"/>
    <property type="molecule type" value="mRNA"/>
</dbReference>
<dbReference type="PIR" id="E86276">
    <property type="entry name" value="E86276"/>
</dbReference>
<dbReference type="RefSeq" id="NP_172877.1">
    <property type="nucleotide sequence ID" value="NM_101291.3"/>
</dbReference>
<dbReference type="SMR" id="Q6NQA8"/>
<dbReference type="BioGRID" id="23226">
    <property type="interactions" value="1"/>
</dbReference>
<dbReference type="FunCoup" id="Q6NQA8">
    <property type="interactions" value="435"/>
</dbReference>
<dbReference type="IntAct" id="Q6NQA8">
    <property type="interactions" value="1"/>
</dbReference>
<dbReference type="STRING" id="3702.Q6NQA8"/>
<dbReference type="GlyCosmos" id="Q6NQA8">
    <property type="glycosylation" value="1 site, No reported glycans"/>
</dbReference>
<dbReference type="GlyGen" id="Q6NQA8">
    <property type="glycosylation" value="1 site"/>
</dbReference>
<dbReference type="iPTMnet" id="Q6NQA8"/>
<dbReference type="PaxDb" id="3702-AT1G14250.1"/>
<dbReference type="ProteomicsDB" id="246595"/>
<dbReference type="EnsemblPlants" id="AT1G14250.1">
    <property type="protein sequence ID" value="AT1G14250.1"/>
    <property type="gene ID" value="AT1G14250"/>
</dbReference>
<dbReference type="GeneID" id="837986"/>
<dbReference type="Gramene" id="AT1G14250.1">
    <property type="protein sequence ID" value="AT1G14250.1"/>
    <property type="gene ID" value="AT1G14250"/>
</dbReference>
<dbReference type="KEGG" id="ath:AT1G14250"/>
<dbReference type="Araport" id="AT1G14250"/>
<dbReference type="TAIR" id="AT1G14250"/>
<dbReference type="eggNOG" id="KOG1386">
    <property type="taxonomic scope" value="Eukaryota"/>
</dbReference>
<dbReference type="HOGENOM" id="CLU_010246_5_1_1"/>
<dbReference type="InParanoid" id="Q6NQA8"/>
<dbReference type="OMA" id="QYDVMEE"/>
<dbReference type="PhylomeDB" id="Q6NQA8"/>
<dbReference type="BioCyc" id="ARA:AT1G14250-MONOMER"/>
<dbReference type="BRENDA" id="3.6.1.5">
    <property type="organism ID" value="399"/>
</dbReference>
<dbReference type="PRO" id="PR:Q6NQA8"/>
<dbReference type="Proteomes" id="UP000006548">
    <property type="component" value="Chromosome 1"/>
</dbReference>
<dbReference type="ExpressionAtlas" id="Q6NQA8">
    <property type="expression patterns" value="baseline and differential"/>
</dbReference>
<dbReference type="GO" id="GO:0016020">
    <property type="term" value="C:membrane"/>
    <property type="evidence" value="ECO:0007669"/>
    <property type="project" value="UniProtKB-SubCell"/>
</dbReference>
<dbReference type="GO" id="GO:0000325">
    <property type="term" value="C:plant-type vacuole"/>
    <property type="evidence" value="ECO:0007005"/>
    <property type="project" value="TAIR"/>
</dbReference>
<dbReference type="GO" id="GO:0004050">
    <property type="term" value="F:apyrase activity"/>
    <property type="evidence" value="ECO:0007669"/>
    <property type="project" value="UniProtKB-EC"/>
</dbReference>
<dbReference type="GO" id="GO:0005524">
    <property type="term" value="F:ATP binding"/>
    <property type="evidence" value="ECO:0007669"/>
    <property type="project" value="UniProtKB-KW"/>
</dbReference>
<dbReference type="CDD" id="cd24042">
    <property type="entry name" value="ASKHA_NBD_AtAPY3-like"/>
    <property type="match status" value="1"/>
</dbReference>
<dbReference type="Gene3D" id="3.30.420.40">
    <property type="match status" value="1"/>
</dbReference>
<dbReference type="Gene3D" id="3.30.420.150">
    <property type="entry name" value="Exopolyphosphatase. Domain 2"/>
    <property type="match status" value="1"/>
</dbReference>
<dbReference type="InterPro" id="IPR000407">
    <property type="entry name" value="GDA1_CD39_NTPase"/>
</dbReference>
<dbReference type="PANTHER" id="PTHR11782">
    <property type="entry name" value="ADENOSINE/GUANOSINE DIPHOSPHATASE"/>
    <property type="match status" value="1"/>
</dbReference>
<dbReference type="PANTHER" id="PTHR11782:SF100">
    <property type="entry name" value="APYRASE 3-RELATED"/>
    <property type="match status" value="1"/>
</dbReference>
<dbReference type="Pfam" id="PF01150">
    <property type="entry name" value="GDA1_CD39"/>
    <property type="match status" value="1"/>
</dbReference>